<sequence length="144" mass="16699">MAFTFAAFCYMLALLLTAALIFFAIWHIIAFDELKTDYKNPIDQCNTLNPLVLPEYLIHAFFCVMFLCAAEWLTLGLNMPLLAYHIWRYMSRPVMSGPGLYDPTTIMNADILAYCQKEGWCKLAFYLLAFFYYLYGMIYVLVSS</sequence>
<name>CNIH1_MOUSE</name>
<protein>
    <recommendedName>
        <fullName>Protein cornichon homolog 1</fullName>
        <shortName>CNIH-1</shortName>
    </recommendedName>
    <alternativeName>
        <fullName>Cornichon family AMPA receptor auxiliary protein 1</fullName>
    </alternativeName>
    <alternativeName>
        <fullName>Protein cornichon homolog</fullName>
    </alternativeName>
</protein>
<reference key="1">
    <citation type="journal article" date="1999" name="Dev. Genes Evol.">
        <title>The mouse cornichon gene family.</title>
        <authorList>
            <person name="Hwang S.-Y."/>
            <person name="Oh B."/>
            <person name="Zhang Z."/>
            <person name="Miller W."/>
            <person name="Solter D."/>
            <person name="Knowles B.B."/>
        </authorList>
    </citation>
    <scope>NUCLEOTIDE SEQUENCE [MRNA]</scope>
    <source>
        <strain>C57BL/6 X DBA/2</strain>
    </source>
</reference>
<reference key="2">
    <citation type="journal article" date="2005" name="Science">
        <title>The transcriptional landscape of the mammalian genome.</title>
        <authorList>
            <person name="Carninci P."/>
            <person name="Kasukawa T."/>
            <person name="Katayama S."/>
            <person name="Gough J."/>
            <person name="Frith M.C."/>
            <person name="Maeda N."/>
            <person name="Oyama R."/>
            <person name="Ravasi T."/>
            <person name="Lenhard B."/>
            <person name="Wells C."/>
            <person name="Kodzius R."/>
            <person name="Shimokawa K."/>
            <person name="Bajic V.B."/>
            <person name="Brenner S.E."/>
            <person name="Batalov S."/>
            <person name="Forrest A.R."/>
            <person name="Zavolan M."/>
            <person name="Davis M.J."/>
            <person name="Wilming L.G."/>
            <person name="Aidinis V."/>
            <person name="Allen J.E."/>
            <person name="Ambesi-Impiombato A."/>
            <person name="Apweiler R."/>
            <person name="Aturaliya R.N."/>
            <person name="Bailey T.L."/>
            <person name="Bansal M."/>
            <person name="Baxter L."/>
            <person name="Beisel K.W."/>
            <person name="Bersano T."/>
            <person name="Bono H."/>
            <person name="Chalk A.M."/>
            <person name="Chiu K.P."/>
            <person name="Choudhary V."/>
            <person name="Christoffels A."/>
            <person name="Clutterbuck D.R."/>
            <person name="Crowe M.L."/>
            <person name="Dalla E."/>
            <person name="Dalrymple B.P."/>
            <person name="de Bono B."/>
            <person name="Della Gatta G."/>
            <person name="di Bernardo D."/>
            <person name="Down T."/>
            <person name="Engstrom P."/>
            <person name="Fagiolini M."/>
            <person name="Faulkner G."/>
            <person name="Fletcher C.F."/>
            <person name="Fukushima T."/>
            <person name="Furuno M."/>
            <person name="Futaki S."/>
            <person name="Gariboldi M."/>
            <person name="Georgii-Hemming P."/>
            <person name="Gingeras T.R."/>
            <person name="Gojobori T."/>
            <person name="Green R.E."/>
            <person name="Gustincich S."/>
            <person name="Harbers M."/>
            <person name="Hayashi Y."/>
            <person name="Hensch T.K."/>
            <person name="Hirokawa N."/>
            <person name="Hill D."/>
            <person name="Huminiecki L."/>
            <person name="Iacono M."/>
            <person name="Ikeo K."/>
            <person name="Iwama A."/>
            <person name="Ishikawa T."/>
            <person name="Jakt M."/>
            <person name="Kanapin A."/>
            <person name="Katoh M."/>
            <person name="Kawasawa Y."/>
            <person name="Kelso J."/>
            <person name="Kitamura H."/>
            <person name="Kitano H."/>
            <person name="Kollias G."/>
            <person name="Krishnan S.P."/>
            <person name="Kruger A."/>
            <person name="Kummerfeld S.K."/>
            <person name="Kurochkin I.V."/>
            <person name="Lareau L.F."/>
            <person name="Lazarevic D."/>
            <person name="Lipovich L."/>
            <person name="Liu J."/>
            <person name="Liuni S."/>
            <person name="McWilliam S."/>
            <person name="Madan Babu M."/>
            <person name="Madera M."/>
            <person name="Marchionni L."/>
            <person name="Matsuda H."/>
            <person name="Matsuzawa S."/>
            <person name="Miki H."/>
            <person name="Mignone F."/>
            <person name="Miyake S."/>
            <person name="Morris K."/>
            <person name="Mottagui-Tabar S."/>
            <person name="Mulder N."/>
            <person name="Nakano N."/>
            <person name="Nakauchi H."/>
            <person name="Ng P."/>
            <person name="Nilsson R."/>
            <person name="Nishiguchi S."/>
            <person name="Nishikawa S."/>
            <person name="Nori F."/>
            <person name="Ohara O."/>
            <person name="Okazaki Y."/>
            <person name="Orlando V."/>
            <person name="Pang K.C."/>
            <person name="Pavan W.J."/>
            <person name="Pavesi G."/>
            <person name="Pesole G."/>
            <person name="Petrovsky N."/>
            <person name="Piazza S."/>
            <person name="Reed J."/>
            <person name="Reid J.F."/>
            <person name="Ring B.Z."/>
            <person name="Ringwald M."/>
            <person name="Rost B."/>
            <person name="Ruan Y."/>
            <person name="Salzberg S.L."/>
            <person name="Sandelin A."/>
            <person name="Schneider C."/>
            <person name="Schoenbach C."/>
            <person name="Sekiguchi K."/>
            <person name="Semple C.A."/>
            <person name="Seno S."/>
            <person name="Sessa L."/>
            <person name="Sheng Y."/>
            <person name="Shibata Y."/>
            <person name="Shimada H."/>
            <person name="Shimada K."/>
            <person name="Silva D."/>
            <person name="Sinclair B."/>
            <person name="Sperling S."/>
            <person name="Stupka E."/>
            <person name="Sugiura K."/>
            <person name="Sultana R."/>
            <person name="Takenaka Y."/>
            <person name="Taki K."/>
            <person name="Tammoja K."/>
            <person name="Tan S.L."/>
            <person name="Tang S."/>
            <person name="Taylor M.S."/>
            <person name="Tegner J."/>
            <person name="Teichmann S.A."/>
            <person name="Ueda H.R."/>
            <person name="van Nimwegen E."/>
            <person name="Verardo R."/>
            <person name="Wei C.L."/>
            <person name="Yagi K."/>
            <person name="Yamanishi H."/>
            <person name="Zabarovsky E."/>
            <person name="Zhu S."/>
            <person name="Zimmer A."/>
            <person name="Hide W."/>
            <person name="Bult C."/>
            <person name="Grimmond S.M."/>
            <person name="Teasdale R.D."/>
            <person name="Liu E.T."/>
            <person name="Brusic V."/>
            <person name="Quackenbush J."/>
            <person name="Wahlestedt C."/>
            <person name="Mattick J.S."/>
            <person name="Hume D.A."/>
            <person name="Kai C."/>
            <person name="Sasaki D."/>
            <person name="Tomaru Y."/>
            <person name="Fukuda S."/>
            <person name="Kanamori-Katayama M."/>
            <person name="Suzuki M."/>
            <person name="Aoki J."/>
            <person name="Arakawa T."/>
            <person name="Iida J."/>
            <person name="Imamura K."/>
            <person name="Itoh M."/>
            <person name="Kato T."/>
            <person name="Kawaji H."/>
            <person name="Kawagashira N."/>
            <person name="Kawashima T."/>
            <person name="Kojima M."/>
            <person name="Kondo S."/>
            <person name="Konno H."/>
            <person name="Nakano K."/>
            <person name="Ninomiya N."/>
            <person name="Nishio T."/>
            <person name="Okada M."/>
            <person name="Plessy C."/>
            <person name="Shibata K."/>
            <person name="Shiraki T."/>
            <person name="Suzuki S."/>
            <person name="Tagami M."/>
            <person name="Waki K."/>
            <person name="Watahiki A."/>
            <person name="Okamura-Oho Y."/>
            <person name="Suzuki H."/>
            <person name="Kawai J."/>
            <person name="Hayashizaki Y."/>
        </authorList>
    </citation>
    <scope>NUCLEOTIDE SEQUENCE [LARGE SCALE MRNA]</scope>
    <source>
        <strain>C57BL/6J</strain>
        <tissue>Bone marrow</tissue>
        <tissue>Kidney</tissue>
    </source>
</reference>
<reference key="3">
    <citation type="journal article" date="2009" name="PLoS Biol.">
        <title>Lineage-specific biology revealed by a finished genome assembly of the mouse.</title>
        <authorList>
            <person name="Church D.M."/>
            <person name="Goodstadt L."/>
            <person name="Hillier L.W."/>
            <person name="Zody M.C."/>
            <person name="Goldstein S."/>
            <person name="She X."/>
            <person name="Bult C.J."/>
            <person name="Agarwala R."/>
            <person name="Cherry J.L."/>
            <person name="DiCuccio M."/>
            <person name="Hlavina W."/>
            <person name="Kapustin Y."/>
            <person name="Meric P."/>
            <person name="Maglott D."/>
            <person name="Birtle Z."/>
            <person name="Marques A.C."/>
            <person name="Graves T."/>
            <person name="Zhou S."/>
            <person name="Teague B."/>
            <person name="Potamousis K."/>
            <person name="Churas C."/>
            <person name="Place M."/>
            <person name="Herschleb J."/>
            <person name="Runnheim R."/>
            <person name="Forrest D."/>
            <person name="Amos-Landgraf J."/>
            <person name="Schwartz D.C."/>
            <person name="Cheng Z."/>
            <person name="Lindblad-Toh K."/>
            <person name="Eichler E.E."/>
            <person name="Ponting C.P."/>
        </authorList>
    </citation>
    <scope>NUCLEOTIDE SEQUENCE [LARGE SCALE GENOMIC DNA]</scope>
    <source>
        <strain>C57BL/6J</strain>
    </source>
</reference>
<reference key="4">
    <citation type="submission" date="2005-07" db="EMBL/GenBank/DDBJ databases">
        <authorList>
            <person name="Mural R.J."/>
            <person name="Adams M.D."/>
            <person name="Myers E.W."/>
            <person name="Smith H.O."/>
            <person name="Venter J.C."/>
        </authorList>
    </citation>
    <scope>NUCLEOTIDE SEQUENCE [LARGE SCALE GENOMIC DNA]</scope>
</reference>
<reference key="5">
    <citation type="journal article" date="2004" name="Genome Res.">
        <title>The status, quality, and expansion of the NIH full-length cDNA project: the Mammalian Gene Collection (MGC).</title>
        <authorList>
            <consortium name="The MGC Project Team"/>
        </authorList>
    </citation>
    <scope>NUCLEOTIDE SEQUENCE [LARGE SCALE MRNA]</scope>
    <source>
        <strain>Czech II</strain>
        <tissue>Lung</tissue>
    </source>
</reference>
<accession>O35372</accession>
<accession>Q6ZWW6</accession>
<evidence type="ECO:0000250" key="1"/>
<evidence type="ECO:0000255" key="2"/>
<evidence type="ECO:0000305" key="3"/>
<keyword id="KW-0256">Endoplasmic reticulum</keyword>
<keyword id="KW-0931">ER-Golgi transport</keyword>
<keyword id="KW-0333">Golgi apparatus</keyword>
<keyword id="KW-0472">Membrane</keyword>
<keyword id="KW-1185">Reference proteome</keyword>
<keyword id="KW-0812">Transmembrane</keyword>
<keyword id="KW-1133">Transmembrane helix</keyword>
<keyword id="KW-0813">Transport</keyword>
<feature type="chain" id="PRO_0000122223" description="Protein cornichon homolog 1">
    <location>
        <begin position="1"/>
        <end position="144"/>
    </location>
</feature>
<feature type="topological domain" description="Cytoplasmic" evidence="2">
    <location>
        <begin position="1"/>
        <end position="10"/>
    </location>
</feature>
<feature type="transmembrane region" description="Helical" evidence="2">
    <location>
        <begin position="11"/>
        <end position="31"/>
    </location>
</feature>
<feature type="topological domain" description="Lumenal" evidence="2">
    <location>
        <begin position="32"/>
        <end position="56"/>
    </location>
</feature>
<feature type="transmembrane region" description="Helical" evidence="2">
    <location>
        <begin position="57"/>
        <end position="77"/>
    </location>
</feature>
<feature type="topological domain" description="Cytoplasmic" evidence="2">
    <location>
        <begin position="78"/>
        <end position="122"/>
    </location>
</feature>
<feature type="transmembrane region" description="Helical" evidence="2">
    <location>
        <begin position="123"/>
        <end position="143"/>
    </location>
</feature>
<feature type="topological domain" description="Lumenal" evidence="2">
    <location>
        <position position="144"/>
    </location>
</feature>
<feature type="sequence conflict" description="In Ref. 1; AAC15828." evidence="3" ref="1">
    <original>G</original>
    <variation>A</variation>
    <location>
        <position position="97"/>
    </location>
</feature>
<gene>
    <name type="primary">Cnih1</name>
    <name type="synonym">Cnih</name>
</gene>
<dbReference type="EMBL" id="AF022811">
    <property type="protein sequence ID" value="AAC15828.1"/>
    <property type="molecule type" value="mRNA"/>
</dbReference>
<dbReference type="EMBL" id="AK002293">
    <property type="protein sequence ID" value="BAB21993.1"/>
    <property type="molecule type" value="mRNA"/>
</dbReference>
<dbReference type="EMBL" id="AK011200">
    <property type="protein sequence ID" value="BAB27463.1"/>
    <property type="molecule type" value="mRNA"/>
</dbReference>
<dbReference type="EMBL" id="AK152432">
    <property type="protein sequence ID" value="BAE31214.1"/>
    <property type="molecule type" value="mRNA"/>
</dbReference>
<dbReference type="EMBL" id="AC093043">
    <property type="status" value="NOT_ANNOTATED_CDS"/>
    <property type="molecule type" value="Genomic_DNA"/>
</dbReference>
<dbReference type="EMBL" id="CH466605">
    <property type="protein sequence ID" value="EDL20721.1"/>
    <property type="molecule type" value="Genomic_DNA"/>
</dbReference>
<dbReference type="EMBL" id="BC034868">
    <property type="protein sequence ID" value="AAH34868.1"/>
    <property type="molecule type" value="mRNA"/>
</dbReference>
<dbReference type="CCDS" id="CCDS26980.1"/>
<dbReference type="RefSeq" id="NP_034049.2">
    <property type="nucleotide sequence ID" value="NM_009919.2"/>
</dbReference>
<dbReference type="SMR" id="O35372"/>
<dbReference type="FunCoup" id="O35372">
    <property type="interactions" value="328"/>
</dbReference>
<dbReference type="STRING" id="10090.ENSMUSP00000015903"/>
<dbReference type="PaxDb" id="10090-ENSMUSP00000015903"/>
<dbReference type="PeptideAtlas" id="O35372"/>
<dbReference type="ProteomicsDB" id="279119"/>
<dbReference type="Pumba" id="O35372"/>
<dbReference type="Antibodypedia" id="151">
    <property type="antibodies" value="92 antibodies from 18 providers"/>
</dbReference>
<dbReference type="DNASU" id="12793"/>
<dbReference type="Ensembl" id="ENSMUST00000015903.12">
    <property type="protein sequence ID" value="ENSMUSP00000015903.5"/>
    <property type="gene ID" value="ENSMUSG00000015759.12"/>
</dbReference>
<dbReference type="GeneID" id="12793"/>
<dbReference type="KEGG" id="mmu:12793"/>
<dbReference type="UCSC" id="uc007thg.3">
    <property type="organism name" value="mouse"/>
</dbReference>
<dbReference type="AGR" id="MGI:1277202"/>
<dbReference type="CTD" id="10175"/>
<dbReference type="MGI" id="MGI:1277202">
    <property type="gene designation" value="Cnih1"/>
</dbReference>
<dbReference type="VEuPathDB" id="HostDB:ENSMUSG00000015759"/>
<dbReference type="eggNOG" id="KOG2729">
    <property type="taxonomic scope" value="Eukaryota"/>
</dbReference>
<dbReference type="GeneTree" id="ENSGT00950000182834"/>
<dbReference type="HOGENOM" id="CLU_112942_1_0_1"/>
<dbReference type="InParanoid" id="O35372"/>
<dbReference type="OMA" id="FAVFHVI"/>
<dbReference type="PhylomeDB" id="O35372"/>
<dbReference type="TreeFam" id="TF300083"/>
<dbReference type="Reactome" id="R-MMU-204005">
    <property type="pathway name" value="COPII-mediated vesicle transport"/>
</dbReference>
<dbReference type="Reactome" id="R-MMU-5694530">
    <property type="pathway name" value="Cargo concentration in the ER"/>
</dbReference>
<dbReference type="BioGRID-ORCS" id="12793">
    <property type="hits" value="2 hits in 76 CRISPR screens"/>
</dbReference>
<dbReference type="ChiTaRS" id="Cnih1">
    <property type="organism name" value="mouse"/>
</dbReference>
<dbReference type="PRO" id="PR:O35372"/>
<dbReference type="Proteomes" id="UP000000589">
    <property type="component" value="Chromosome 14"/>
</dbReference>
<dbReference type="RNAct" id="O35372">
    <property type="molecule type" value="protein"/>
</dbReference>
<dbReference type="Bgee" id="ENSMUSG00000015759">
    <property type="expression patterns" value="Expressed in frontonasal prominence and 285 other cell types or tissues"/>
</dbReference>
<dbReference type="ExpressionAtlas" id="O35372">
    <property type="expression patterns" value="baseline and differential"/>
</dbReference>
<dbReference type="GO" id="GO:0005789">
    <property type="term" value="C:endoplasmic reticulum membrane"/>
    <property type="evidence" value="ECO:0007669"/>
    <property type="project" value="UniProtKB-SubCell"/>
</dbReference>
<dbReference type="GO" id="GO:0000139">
    <property type="term" value="C:Golgi membrane"/>
    <property type="evidence" value="ECO:0007669"/>
    <property type="project" value="UniProtKB-SubCell"/>
</dbReference>
<dbReference type="GO" id="GO:0016192">
    <property type="term" value="P:vesicle-mediated transport"/>
    <property type="evidence" value="ECO:0007669"/>
    <property type="project" value="UniProtKB-KW"/>
</dbReference>
<dbReference type="InterPro" id="IPR003377">
    <property type="entry name" value="Cornichon"/>
</dbReference>
<dbReference type="InterPro" id="IPR033466">
    <property type="entry name" value="Cornichon_conserved"/>
</dbReference>
<dbReference type="PANTHER" id="PTHR12290">
    <property type="entry name" value="CORNICHON-RELATED"/>
    <property type="match status" value="1"/>
</dbReference>
<dbReference type="Pfam" id="PF03311">
    <property type="entry name" value="Cornichon"/>
    <property type="match status" value="1"/>
</dbReference>
<dbReference type="SMART" id="SM01398">
    <property type="entry name" value="Cornichon"/>
    <property type="match status" value="1"/>
</dbReference>
<dbReference type="PROSITE" id="PS01340">
    <property type="entry name" value="CORNICHON"/>
    <property type="match status" value="1"/>
</dbReference>
<proteinExistence type="evidence at transcript level"/>
<organism>
    <name type="scientific">Mus musculus</name>
    <name type="common">Mouse</name>
    <dbReference type="NCBI Taxonomy" id="10090"/>
    <lineage>
        <taxon>Eukaryota</taxon>
        <taxon>Metazoa</taxon>
        <taxon>Chordata</taxon>
        <taxon>Craniata</taxon>
        <taxon>Vertebrata</taxon>
        <taxon>Euteleostomi</taxon>
        <taxon>Mammalia</taxon>
        <taxon>Eutheria</taxon>
        <taxon>Euarchontoglires</taxon>
        <taxon>Glires</taxon>
        <taxon>Rodentia</taxon>
        <taxon>Myomorpha</taxon>
        <taxon>Muroidea</taxon>
        <taxon>Muridae</taxon>
        <taxon>Murinae</taxon>
        <taxon>Mus</taxon>
        <taxon>Mus</taxon>
    </lineage>
</organism>
<comment type="function">
    <text evidence="1">Involved in the selective transport and maturation of TGF-alpha family proteins.</text>
</comment>
<comment type="subunit">
    <text evidence="1">Interacts with AREG immature precursor and with immature TGFA, i.e. with a prosegment and lacking full N-glycosylation, but not with the fully N-glycosylated form. In the Golgi apparatus, may form a complex with GORASP55 and transmembrane TGFA (By similarity).</text>
</comment>
<comment type="subcellular location">
    <subcellularLocation>
        <location>Endoplasmic reticulum membrane</location>
        <topology>Multi-pass membrane protein</topology>
    </subcellularLocation>
    <subcellularLocation>
        <location>Golgi apparatus membrane</location>
    </subcellularLocation>
    <text evidence="1">Located primarily in the ER; may cycle between the ER and the Golgi apparatus.</text>
</comment>
<comment type="tissue specificity">
    <text>Expressed in oocytes, and at a basal level in ovarian somatic cells of 6-week-old mouse. Expressed in adult brain.</text>
</comment>
<comment type="developmental stage">
    <text>Abundant in full grown oocyte and the ovulated unfertilized egg, shows a slight decrease 12 hours after fertilization. Transcripts from the activated embryonic genome are present in the eight-cell embryo.</text>
</comment>
<comment type="similarity">
    <text evidence="3">Belongs to the cornichon family.</text>
</comment>